<protein>
    <recommendedName>
        <fullName>Tyrosine-protein phosphatase 2</fullName>
        <ecNumber>3.1.3.48</ecNumber>
    </recommendedName>
    <alternativeName>
        <fullName>Protein-tyrosine-phosphate phosphohydrolase 2</fullName>
        <shortName>PTPA</shortName>
    </alternativeName>
</protein>
<gene>
    <name type="primary">ptpB</name>
    <name type="synonym">ptp2</name>
    <name type="ORF">DDB_G0277865</name>
</gene>
<evidence type="ECO:0000255" key="1">
    <source>
        <dbReference type="PROSITE-ProRule" id="PRU00160"/>
    </source>
</evidence>
<evidence type="ECO:0000255" key="2">
    <source>
        <dbReference type="PROSITE-ProRule" id="PRU10044"/>
    </source>
</evidence>
<evidence type="ECO:0000256" key="3">
    <source>
        <dbReference type="SAM" id="MobiDB-lite"/>
    </source>
</evidence>
<evidence type="ECO:0000305" key="4"/>
<dbReference type="EC" id="3.1.3.48"/>
<dbReference type="EMBL" id="L15420">
    <property type="protein sequence ID" value="AAA33242.1"/>
    <property type="molecule type" value="mRNA"/>
</dbReference>
<dbReference type="EMBL" id="AAFI02000023">
    <property type="protein sequence ID" value="EAL68105.1"/>
    <property type="molecule type" value="Genomic_DNA"/>
</dbReference>
<dbReference type="PIR" id="A48711">
    <property type="entry name" value="A48711"/>
</dbReference>
<dbReference type="RefSeq" id="XP_642173.1">
    <property type="nucleotide sequence ID" value="XM_637081.1"/>
</dbReference>
<dbReference type="SMR" id="P34138"/>
<dbReference type="FunCoup" id="P34138">
    <property type="interactions" value="461"/>
</dbReference>
<dbReference type="STRING" id="44689.P34138"/>
<dbReference type="PaxDb" id="44689-DDB0214985"/>
<dbReference type="EnsemblProtists" id="EAL68105">
    <property type="protein sequence ID" value="EAL68105"/>
    <property type="gene ID" value="DDB_G0277865"/>
</dbReference>
<dbReference type="GeneID" id="8621380"/>
<dbReference type="KEGG" id="ddi:DDB_G0277865"/>
<dbReference type="dictyBase" id="DDB_G0277865">
    <property type="gene designation" value="ptpB"/>
</dbReference>
<dbReference type="VEuPathDB" id="AmoebaDB:DDB_G0277865"/>
<dbReference type="eggNOG" id="KOG0792">
    <property type="taxonomic scope" value="Eukaryota"/>
</dbReference>
<dbReference type="HOGENOM" id="CLU_001645_9_1_1"/>
<dbReference type="InParanoid" id="P34138"/>
<dbReference type="OMA" id="KYTIWLL"/>
<dbReference type="PhylomeDB" id="P34138"/>
<dbReference type="Reactome" id="R-DDI-5675221">
    <property type="pathway name" value="Negative regulation of MAPK pathway"/>
</dbReference>
<dbReference type="Reactome" id="R-DDI-6798695">
    <property type="pathway name" value="Neutrophil degranulation"/>
</dbReference>
<dbReference type="PRO" id="PR:P34138"/>
<dbReference type="Proteomes" id="UP000002195">
    <property type="component" value="Chromosome 3"/>
</dbReference>
<dbReference type="GO" id="GO:0016791">
    <property type="term" value="F:phosphatase activity"/>
    <property type="evidence" value="ECO:0000314"/>
    <property type="project" value="dictyBase"/>
</dbReference>
<dbReference type="GO" id="GO:0004725">
    <property type="term" value="F:protein tyrosine phosphatase activity"/>
    <property type="evidence" value="ECO:0000314"/>
    <property type="project" value="dictyBase"/>
</dbReference>
<dbReference type="GO" id="GO:0031152">
    <property type="term" value="P:aggregation involved in sorocarp development"/>
    <property type="evidence" value="ECO:0000315"/>
    <property type="project" value="dictyBase"/>
</dbReference>
<dbReference type="CDD" id="cd00047">
    <property type="entry name" value="PTPc"/>
    <property type="match status" value="1"/>
</dbReference>
<dbReference type="Gene3D" id="3.90.190.10">
    <property type="entry name" value="Protein tyrosine phosphatase superfamily"/>
    <property type="match status" value="1"/>
</dbReference>
<dbReference type="InterPro" id="IPR029021">
    <property type="entry name" value="Prot-tyrosine_phosphatase-like"/>
</dbReference>
<dbReference type="InterPro" id="IPR050348">
    <property type="entry name" value="Protein-Tyr_Phosphatase"/>
</dbReference>
<dbReference type="InterPro" id="IPR000242">
    <property type="entry name" value="PTP_cat"/>
</dbReference>
<dbReference type="InterPro" id="IPR016130">
    <property type="entry name" value="Tyr_Pase_AS"/>
</dbReference>
<dbReference type="InterPro" id="IPR003595">
    <property type="entry name" value="Tyr_Pase_cat"/>
</dbReference>
<dbReference type="InterPro" id="IPR000387">
    <property type="entry name" value="Tyr_Pase_dom"/>
</dbReference>
<dbReference type="PANTHER" id="PTHR19134">
    <property type="entry name" value="RECEPTOR-TYPE TYROSINE-PROTEIN PHOSPHATASE"/>
    <property type="match status" value="1"/>
</dbReference>
<dbReference type="PANTHER" id="PTHR19134:SF546">
    <property type="entry name" value="TYROSINE-PROTEIN PHOSPHATASE 2"/>
    <property type="match status" value="1"/>
</dbReference>
<dbReference type="Pfam" id="PF00102">
    <property type="entry name" value="Y_phosphatase"/>
    <property type="match status" value="1"/>
</dbReference>
<dbReference type="PRINTS" id="PR00700">
    <property type="entry name" value="PRTYPHPHTASE"/>
</dbReference>
<dbReference type="SMART" id="SM00194">
    <property type="entry name" value="PTPc"/>
    <property type="match status" value="1"/>
</dbReference>
<dbReference type="SMART" id="SM00404">
    <property type="entry name" value="PTPc_motif"/>
    <property type="match status" value="1"/>
</dbReference>
<dbReference type="SUPFAM" id="SSF52799">
    <property type="entry name" value="(Phosphotyrosine protein) phosphatases II"/>
    <property type="match status" value="1"/>
</dbReference>
<dbReference type="PROSITE" id="PS00383">
    <property type="entry name" value="TYR_PHOSPHATASE_1"/>
    <property type="match status" value="1"/>
</dbReference>
<dbReference type="PROSITE" id="PS50056">
    <property type="entry name" value="TYR_PHOSPHATASE_2"/>
    <property type="match status" value="1"/>
</dbReference>
<dbReference type="PROSITE" id="PS50055">
    <property type="entry name" value="TYR_PHOSPHATASE_PTP"/>
    <property type="match status" value="1"/>
</dbReference>
<comment type="catalytic activity">
    <reaction evidence="2">
        <text>O-phospho-L-tyrosyl-[protein] + H2O = L-tyrosyl-[protein] + phosphate</text>
        <dbReference type="Rhea" id="RHEA:10684"/>
        <dbReference type="Rhea" id="RHEA-COMP:10136"/>
        <dbReference type="Rhea" id="RHEA-COMP:20101"/>
        <dbReference type="ChEBI" id="CHEBI:15377"/>
        <dbReference type="ChEBI" id="CHEBI:43474"/>
        <dbReference type="ChEBI" id="CHEBI:46858"/>
        <dbReference type="ChEBI" id="CHEBI:61978"/>
        <dbReference type="EC" id="3.1.3.48"/>
    </reaction>
</comment>
<comment type="similarity">
    <text evidence="4">Belongs to the protein-tyrosine phosphatase family. Non-receptor class subfamily.</text>
</comment>
<sequence>MDESFDAFEIKPNSSIIEHFNNHPTCIDKEFNFILQKTELRALETDKFRSALEAKNKLKNRYSNVLPFEETRVKINIDDDDDDEDDNEDDIIVSNNNNNNNNNEKRIKRNSIGSSGQSDVMSNSSDEEDHGGSGDEGTTLSDYINASFINNGTYICTQGPLLNTIVDFWKMIWEQNSNIIVMLTREEENFKTKCDKYWPDKDEERYGNFIVKFDNNITIPDILIRREFTLENLKDNKTRKIYHFQYTTWPDHGTPVSTTGFLKFVSFVDHEKRSGPIVVHCSAGIGRSGTFVAIHSIVAKFAKHYDEKKQAPSINLPKLVVEMRNERPGMVQTRDQYRFCYLAISEAMNTVLKKEQKKRKGLSYSYSSIPLTGPEHD</sequence>
<name>PTP2_DICDI</name>
<organism>
    <name type="scientific">Dictyostelium discoideum</name>
    <name type="common">Social amoeba</name>
    <dbReference type="NCBI Taxonomy" id="44689"/>
    <lineage>
        <taxon>Eukaryota</taxon>
        <taxon>Amoebozoa</taxon>
        <taxon>Evosea</taxon>
        <taxon>Eumycetozoa</taxon>
        <taxon>Dictyostelia</taxon>
        <taxon>Dictyosteliales</taxon>
        <taxon>Dictyosteliaceae</taxon>
        <taxon>Dictyostelium</taxon>
    </lineage>
</organism>
<keyword id="KW-0378">Hydrolase</keyword>
<keyword id="KW-0904">Protein phosphatase</keyword>
<keyword id="KW-1185">Reference proteome</keyword>
<accession>P34138</accession>
<accession>Q54YM9</accession>
<reference key="1">
    <citation type="journal article" date="1993" name="J. Biol. Chem.">
        <title>Cloning and functional expression of a Dictyostelium discoideum protein tyrosine phosphatase.</title>
        <authorList>
            <person name="Ramalingam R."/>
            <person name="Shaw D.R."/>
            <person name="Ennis H."/>
        </authorList>
    </citation>
    <scope>NUCLEOTIDE SEQUENCE [MRNA]</scope>
    <source>
        <strain>AX4</strain>
    </source>
</reference>
<reference key="2">
    <citation type="journal article" date="2005" name="Nature">
        <title>The genome of the social amoeba Dictyostelium discoideum.</title>
        <authorList>
            <person name="Eichinger L."/>
            <person name="Pachebat J.A."/>
            <person name="Gloeckner G."/>
            <person name="Rajandream M.A."/>
            <person name="Sucgang R."/>
            <person name="Berriman M."/>
            <person name="Song J."/>
            <person name="Olsen R."/>
            <person name="Szafranski K."/>
            <person name="Xu Q."/>
            <person name="Tunggal B."/>
            <person name="Kummerfeld S."/>
            <person name="Madera M."/>
            <person name="Konfortov B.A."/>
            <person name="Rivero F."/>
            <person name="Bankier A.T."/>
            <person name="Lehmann R."/>
            <person name="Hamlin N."/>
            <person name="Davies R."/>
            <person name="Gaudet P."/>
            <person name="Fey P."/>
            <person name="Pilcher K."/>
            <person name="Chen G."/>
            <person name="Saunders D."/>
            <person name="Sodergren E.J."/>
            <person name="Davis P."/>
            <person name="Kerhornou A."/>
            <person name="Nie X."/>
            <person name="Hall N."/>
            <person name="Anjard C."/>
            <person name="Hemphill L."/>
            <person name="Bason N."/>
            <person name="Farbrother P."/>
            <person name="Desany B."/>
            <person name="Just E."/>
            <person name="Morio T."/>
            <person name="Rost R."/>
            <person name="Churcher C.M."/>
            <person name="Cooper J."/>
            <person name="Haydock S."/>
            <person name="van Driessche N."/>
            <person name="Cronin A."/>
            <person name="Goodhead I."/>
            <person name="Muzny D.M."/>
            <person name="Mourier T."/>
            <person name="Pain A."/>
            <person name="Lu M."/>
            <person name="Harper D."/>
            <person name="Lindsay R."/>
            <person name="Hauser H."/>
            <person name="James K.D."/>
            <person name="Quiles M."/>
            <person name="Madan Babu M."/>
            <person name="Saito T."/>
            <person name="Buchrieser C."/>
            <person name="Wardroper A."/>
            <person name="Felder M."/>
            <person name="Thangavelu M."/>
            <person name="Johnson D."/>
            <person name="Knights A."/>
            <person name="Loulseged H."/>
            <person name="Mungall K.L."/>
            <person name="Oliver K."/>
            <person name="Price C."/>
            <person name="Quail M.A."/>
            <person name="Urushihara H."/>
            <person name="Hernandez J."/>
            <person name="Rabbinowitsch E."/>
            <person name="Steffen D."/>
            <person name="Sanders M."/>
            <person name="Ma J."/>
            <person name="Kohara Y."/>
            <person name="Sharp S."/>
            <person name="Simmonds M.N."/>
            <person name="Spiegler S."/>
            <person name="Tivey A."/>
            <person name="Sugano S."/>
            <person name="White B."/>
            <person name="Walker D."/>
            <person name="Woodward J.R."/>
            <person name="Winckler T."/>
            <person name="Tanaka Y."/>
            <person name="Shaulsky G."/>
            <person name="Schleicher M."/>
            <person name="Weinstock G.M."/>
            <person name="Rosenthal A."/>
            <person name="Cox E.C."/>
            <person name="Chisholm R.L."/>
            <person name="Gibbs R.A."/>
            <person name="Loomis W.F."/>
            <person name="Platzer M."/>
            <person name="Kay R.R."/>
            <person name="Williams J.G."/>
            <person name="Dear P.H."/>
            <person name="Noegel A.A."/>
            <person name="Barrell B.G."/>
            <person name="Kuspa A."/>
        </authorList>
    </citation>
    <scope>NUCLEOTIDE SEQUENCE [LARGE SCALE GENOMIC DNA]</scope>
    <source>
        <strain>AX4</strain>
    </source>
</reference>
<proteinExistence type="evidence at transcript level"/>
<feature type="chain" id="PRO_0000094887" description="Tyrosine-protein phosphatase 2">
    <location>
        <begin position="1"/>
        <end position="377"/>
    </location>
</feature>
<feature type="domain" description="Tyrosine-protein phosphatase" evidence="1">
    <location>
        <begin position="27"/>
        <end position="347"/>
    </location>
</feature>
<feature type="region of interest" description="Disordered" evidence="3">
    <location>
        <begin position="77"/>
        <end position="137"/>
    </location>
</feature>
<feature type="compositionally biased region" description="Acidic residues" evidence="3">
    <location>
        <begin position="78"/>
        <end position="91"/>
    </location>
</feature>
<feature type="compositionally biased region" description="Low complexity" evidence="3">
    <location>
        <begin position="92"/>
        <end position="102"/>
    </location>
</feature>
<feature type="compositionally biased region" description="Polar residues" evidence="3">
    <location>
        <begin position="113"/>
        <end position="123"/>
    </location>
</feature>
<feature type="active site" description="Phosphocysteine intermediate" evidence="1 2">
    <location>
        <position position="281"/>
    </location>
</feature>